<dbReference type="EC" id="2.4.2.1" evidence="2"/>
<dbReference type="EMBL" id="AM295007">
    <property type="protein sequence ID" value="CAM30435.1"/>
    <property type="molecule type" value="Genomic_DNA"/>
</dbReference>
<dbReference type="RefSeq" id="WP_011888974.1">
    <property type="nucleotide sequence ID" value="NC_009332.1"/>
</dbReference>
<dbReference type="SMR" id="A2RF09"/>
<dbReference type="KEGG" id="spf:SpyM51109"/>
<dbReference type="HOGENOM" id="CLU_068457_2_0_9"/>
<dbReference type="GO" id="GO:0005829">
    <property type="term" value="C:cytosol"/>
    <property type="evidence" value="ECO:0007669"/>
    <property type="project" value="TreeGrafter"/>
</dbReference>
<dbReference type="GO" id="GO:0004731">
    <property type="term" value="F:purine-nucleoside phosphorylase activity"/>
    <property type="evidence" value="ECO:0007669"/>
    <property type="project" value="UniProtKB-UniRule"/>
</dbReference>
<dbReference type="GO" id="GO:0006152">
    <property type="term" value="P:purine nucleoside catabolic process"/>
    <property type="evidence" value="ECO:0007669"/>
    <property type="project" value="TreeGrafter"/>
</dbReference>
<dbReference type="CDD" id="cd09006">
    <property type="entry name" value="PNP_EcPNPI-like"/>
    <property type="match status" value="1"/>
</dbReference>
<dbReference type="Gene3D" id="3.40.50.1580">
    <property type="entry name" value="Nucleoside phosphorylase domain"/>
    <property type="match status" value="1"/>
</dbReference>
<dbReference type="HAMAP" id="MF_01627">
    <property type="entry name" value="Pur_nucleosid_phosp"/>
    <property type="match status" value="1"/>
</dbReference>
<dbReference type="InterPro" id="IPR004402">
    <property type="entry name" value="DeoD-type"/>
</dbReference>
<dbReference type="InterPro" id="IPR018016">
    <property type="entry name" value="Nucleoside_phosphorylase_CS"/>
</dbReference>
<dbReference type="InterPro" id="IPR000845">
    <property type="entry name" value="Nucleoside_phosphorylase_d"/>
</dbReference>
<dbReference type="InterPro" id="IPR035994">
    <property type="entry name" value="Nucleoside_phosphorylase_sf"/>
</dbReference>
<dbReference type="NCBIfam" id="TIGR00107">
    <property type="entry name" value="deoD"/>
    <property type="match status" value="1"/>
</dbReference>
<dbReference type="NCBIfam" id="NF004489">
    <property type="entry name" value="PRK05819.1"/>
    <property type="match status" value="1"/>
</dbReference>
<dbReference type="PANTHER" id="PTHR43691:SF11">
    <property type="entry name" value="FI09636P-RELATED"/>
    <property type="match status" value="1"/>
</dbReference>
<dbReference type="PANTHER" id="PTHR43691">
    <property type="entry name" value="URIDINE PHOSPHORYLASE"/>
    <property type="match status" value="1"/>
</dbReference>
<dbReference type="Pfam" id="PF01048">
    <property type="entry name" value="PNP_UDP_1"/>
    <property type="match status" value="1"/>
</dbReference>
<dbReference type="SUPFAM" id="SSF53167">
    <property type="entry name" value="Purine and uridine phosphorylases"/>
    <property type="match status" value="1"/>
</dbReference>
<dbReference type="PROSITE" id="PS01232">
    <property type="entry name" value="PNP_UDP_1"/>
    <property type="match status" value="1"/>
</dbReference>
<proteinExistence type="inferred from homology"/>
<gene>
    <name evidence="2" type="primary">deoD</name>
    <name type="ordered locus">SpyM51109</name>
</gene>
<organism>
    <name type="scientific">Streptococcus pyogenes serotype M5 (strain Manfredo)</name>
    <dbReference type="NCBI Taxonomy" id="160491"/>
    <lineage>
        <taxon>Bacteria</taxon>
        <taxon>Bacillati</taxon>
        <taxon>Bacillota</taxon>
        <taxon>Bacilli</taxon>
        <taxon>Lactobacillales</taxon>
        <taxon>Streptococcaceae</taxon>
        <taxon>Streptococcus</taxon>
    </lineage>
</organism>
<keyword id="KW-0328">Glycosyltransferase</keyword>
<keyword id="KW-0808">Transferase</keyword>
<evidence type="ECO:0000250" key="1">
    <source>
        <dbReference type="UniProtKB" id="P50389"/>
    </source>
</evidence>
<evidence type="ECO:0000255" key="2">
    <source>
        <dbReference type="HAMAP-Rule" id="MF_01627"/>
    </source>
</evidence>
<reference key="1">
    <citation type="journal article" date="2007" name="J. Bacteriol.">
        <title>Complete genome of acute rheumatic fever-associated serotype M5 Streptococcus pyogenes strain Manfredo.</title>
        <authorList>
            <person name="Holden M.T.G."/>
            <person name="Scott A."/>
            <person name="Cherevach I."/>
            <person name="Chillingworth T."/>
            <person name="Churcher C."/>
            <person name="Cronin A."/>
            <person name="Dowd L."/>
            <person name="Feltwell T."/>
            <person name="Hamlin N."/>
            <person name="Holroyd S."/>
            <person name="Jagels K."/>
            <person name="Moule S."/>
            <person name="Mungall K."/>
            <person name="Quail M.A."/>
            <person name="Price C."/>
            <person name="Rabbinowitsch E."/>
            <person name="Sharp S."/>
            <person name="Skelton J."/>
            <person name="Whitehead S."/>
            <person name="Barrell B.G."/>
            <person name="Kehoe M."/>
            <person name="Parkhill J."/>
        </authorList>
    </citation>
    <scope>NUCLEOTIDE SEQUENCE [LARGE SCALE GENOMIC DNA]</scope>
    <source>
        <strain>Manfredo</strain>
    </source>
</reference>
<protein>
    <recommendedName>
        <fullName evidence="2">Purine nucleoside phosphorylase DeoD-type</fullName>
        <shortName evidence="2">PNP</shortName>
        <ecNumber evidence="2">2.4.2.1</ecNumber>
    </recommendedName>
</protein>
<comment type="function">
    <text evidence="2">Catalyzes the reversible phosphorolytic breakdown of the N-glycosidic bond in the beta-(deoxy)ribonucleoside molecules, with the formation of the corresponding free purine bases and pentose-1-phosphate.</text>
</comment>
<comment type="catalytic activity">
    <reaction evidence="2">
        <text>a purine D-ribonucleoside + phosphate = a purine nucleobase + alpha-D-ribose 1-phosphate</text>
        <dbReference type="Rhea" id="RHEA:19805"/>
        <dbReference type="ChEBI" id="CHEBI:26386"/>
        <dbReference type="ChEBI" id="CHEBI:43474"/>
        <dbReference type="ChEBI" id="CHEBI:57720"/>
        <dbReference type="ChEBI" id="CHEBI:142355"/>
        <dbReference type="EC" id="2.4.2.1"/>
    </reaction>
</comment>
<comment type="catalytic activity">
    <reaction evidence="2">
        <text>a purine 2'-deoxy-D-ribonucleoside + phosphate = a purine nucleobase + 2-deoxy-alpha-D-ribose 1-phosphate</text>
        <dbReference type="Rhea" id="RHEA:36431"/>
        <dbReference type="ChEBI" id="CHEBI:26386"/>
        <dbReference type="ChEBI" id="CHEBI:43474"/>
        <dbReference type="ChEBI" id="CHEBI:57259"/>
        <dbReference type="ChEBI" id="CHEBI:142361"/>
        <dbReference type="EC" id="2.4.2.1"/>
    </reaction>
</comment>
<comment type="subunit">
    <text evidence="2">Homohexamer; trimer of homodimers.</text>
</comment>
<comment type="similarity">
    <text evidence="2">Belongs to the PNP/UDP phosphorylase family.</text>
</comment>
<feature type="chain" id="PRO_1000186231" description="Purine nucleoside phosphorylase DeoD-type">
    <location>
        <begin position="1"/>
        <end position="237"/>
    </location>
</feature>
<feature type="active site" description="Proton donor" evidence="2">
    <location>
        <position position="204"/>
    </location>
</feature>
<feature type="binding site" evidence="1">
    <location>
        <position position="4"/>
    </location>
    <ligand>
        <name>a purine D-ribonucleoside</name>
        <dbReference type="ChEBI" id="CHEBI:142355"/>
        <note>ligand shared between dimeric partners</note>
    </ligand>
</feature>
<feature type="binding site" description="in other chain" evidence="1">
    <location>
        <position position="20"/>
    </location>
    <ligand>
        <name>phosphate</name>
        <dbReference type="ChEBI" id="CHEBI:43474"/>
        <note>ligand shared between dimeric partners</note>
    </ligand>
</feature>
<feature type="binding site" description="in other chain" evidence="1">
    <location>
        <position position="24"/>
    </location>
    <ligand>
        <name>phosphate</name>
        <dbReference type="ChEBI" id="CHEBI:43474"/>
        <note>ligand shared between dimeric partners</note>
    </ligand>
</feature>
<feature type="binding site" evidence="1">
    <location>
        <position position="43"/>
    </location>
    <ligand>
        <name>phosphate</name>
        <dbReference type="ChEBI" id="CHEBI:43474"/>
        <note>ligand shared between dimeric partners</note>
    </ligand>
</feature>
<feature type="binding site" description="in other chain" evidence="1">
    <location>
        <begin position="87"/>
        <end position="90"/>
    </location>
    <ligand>
        <name>phosphate</name>
        <dbReference type="ChEBI" id="CHEBI:43474"/>
        <note>ligand shared between dimeric partners</note>
    </ligand>
</feature>
<feature type="binding site" description="in other chain" evidence="1">
    <location>
        <begin position="179"/>
        <end position="181"/>
    </location>
    <ligand>
        <name>a purine D-ribonucleoside</name>
        <dbReference type="ChEBI" id="CHEBI:142355"/>
        <note>ligand shared between dimeric partners</note>
    </ligand>
</feature>
<feature type="binding site" description="in other chain" evidence="1">
    <location>
        <begin position="203"/>
        <end position="204"/>
    </location>
    <ligand>
        <name>a purine D-ribonucleoside</name>
        <dbReference type="ChEBI" id="CHEBI:142355"/>
        <note>ligand shared between dimeric partners</note>
    </ligand>
</feature>
<feature type="site" description="Important for catalytic activity" evidence="2">
    <location>
        <position position="218"/>
    </location>
</feature>
<sequence>MSIHISAKKGDIADKILLPGDPLRAKFIAENFLEDAVCFNEVRNMFGYTGTYKGHRVSVMGTGMGMPSISIYARELIVDYGVKTLIRVGTAGAIDPEVHVRELVLAQAAATNSNIIRNDFPEFDFPQIADFGLLDKAYHIAREMGVTTHVGNVLSSDVFYTNMPERNMALGKLGVKAIEMEAAALYYLATQHHVKALGIMTISDNLNDPTEDTTAEERQTTFTDMMKIGLETLIAND</sequence>
<accession>A2RF09</accession>
<name>DEOD_STRPG</name>